<accession>P52234</accession>
<accession>E0SDU7</accession>
<keyword id="KW-1015">Disulfide bond</keyword>
<keyword id="KW-0574">Periplasm</keyword>
<keyword id="KW-0676">Redox-active center</keyword>
<keyword id="KW-1185">Reference proteome</keyword>
<keyword id="KW-0732">Signal</keyword>
<name>DSBA_DICD3</name>
<comment type="function">
    <text>Required for disulfide bond formation in some periplasmic proteins such as PhoA or OmpA. Acts by transferring its disulfide bond to other proteins and is reduced in the process. DsbA is reoxidized by DsbB. It is required for pilus biogenesis.</text>
</comment>
<comment type="subcellular location">
    <subcellularLocation>
        <location>Periplasm</location>
    </subcellularLocation>
</comment>
<comment type="similarity">
    <text evidence="3">Belongs to the thioredoxin family. DsbA subfamily.</text>
</comment>
<protein>
    <recommendedName>
        <fullName>Thiol:disulfide interchange protein DsbA</fullName>
    </recommendedName>
</protein>
<sequence length="207" mass="22838">MKKLWLALAGMVLAFSASAADFSDGKQYATLDKPVPQSPQVLEFFSFYCPHCYQFAQVYHIPDAIQKALPADAKLTKYHVDFLGELGKELTQAWAVAIALGVEDKVSPLMFDAVQKTQTVKQPQDIRQVFVAAGVKAEDYDSALNSFVVKSLVAQQEKAAADLQLRGVPAVFVNGKYMIKSDGLDTSSMDNYVKQYADVVKFLLSQK</sequence>
<evidence type="ECO:0000255" key="1"/>
<evidence type="ECO:0000255" key="2">
    <source>
        <dbReference type="PROSITE-ProRule" id="PRU00691"/>
    </source>
</evidence>
<evidence type="ECO:0000305" key="3"/>
<feature type="signal peptide" evidence="1">
    <location>
        <begin position="1"/>
        <end position="19"/>
    </location>
</feature>
<feature type="chain" id="PRO_0000034259" description="Thiol:disulfide interchange protein DsbA">
    <location>
        <begin position="20"/>
        <end position="207"/>
    </location>
</feature>
<feature type="domain" description="Thioredoxin" evidence="2">
    <location>
        <begin position="20"/>
        <end position="149"/>
    </location>
</feature>
<feature type="disulfide bond" description="Redox-active" evidence="2">
    <location>
        <begin position="49"/>
        <end position="52"/>
    </location>
</feature>
<dbReference type="EMBL" id="X75900">
    <property type="protein sequence ID" value="CAA53508.1"/>
    <property type="molecule type" value="Genomic_DNA"/>
</dbReference>
<dbReference type="EMBL" id="CP002038">
    <property type="protein sequence ID" value="ADM96239.1"/>
    <property type="molecule type" value="Genomic_DNA"/>
</dbReference>
<dbReference type="PIR" id="S77725">
    <property type="entry name" value="S77725"/>
</dbReference>
<dbReference type="RefSeq" id="WP_013315728.1">
    <property type="nucleotide sequence ID" value="NC_014500.1"/>
</dbReference>
<dbReference type="SMR" id="P52234"/>
<dbReference type="STRING" id="198628.Dda3937_01111"/>
<dbReference type="GeneID" id="55491199"/>
<dbReference type="KEGG" id="ddd:Dda3937_01111"/>
<dbReference type="PATRIC" id="fig|198628.6.peg.17"/>
<dbReference type="eggNOG" id="COG1651">
    <property type="taxonomic scope" value="Bacteria"/>
</dbReference>
<dbReference type="HOGENOM" id="CLU_088255_3_0_6"/>
<dbReference type="OrthoDB" id="9784896at2"/>
<dbReference type="Proteomes" id="UP000006859">
    <property type="component" value="Chromosome"/>
</dbReference>
<dbReference type="GO" id="GO:0042597">
    <property type="term" value="C:periplasmic space"/>
    <property type="evidence" value="ECO:0007669"/>
    <property type="project" value="UniProtKB-SubCell"/>
</dbReference>
<dbReference type="GO" id="GO:0015036">
    <property type="term" value="F:disulfide oxidoreductase activity"/>
    <property type="evidence" value="ECO:0007669"/>
    <property type="project" value="UniProtKB-ARBA"/>
</dbReference>
<dbReference type="CDD" id="cd03019">
    <property type="entry name" value="DsbA_DsbA"/>
    <property type="match status" value="1"/>
</dbReference>
<dbReference type="Gene3D" id="3.40.30.10">
    <property type="entry name" value="Glutaredoxin"/>
    <property type="match status" value="1"/>
</dbReference>
<dbReference type="InterPro" id="IPR001853">
    <property type="entry name" value="DSBA-like_thioredoxin_dom"/>
</dbReference>
<dbReference type="InterPro" id="IPR023205">
    <property type="entry name" value="DsbA/DsbL"/>
</dbReference>
<dbReference type="InterPro" id="IPR050824">
    <property type="entry name" value="Thiol_disulfide_DsbA"/>
</dbReference>
<dbReference type="InterPro" id="IPR036249">
    <property type="entry name" value="Thioredoxin-like_sf"/>
</dbReference>
<dbReference type="InterPro" id="IPR017937">
    <property type="entry name" value="Thioredoxin_CS"/>
</dbReference>
<dbReference type="InterPro" id="IPR013766">
    <property type="entry name" value="Thioredoxin_domain"/>
</dbReference>
<dbReference type="NCBIfam" id="NF008198">
    <property type="entry name" value="PRK10954.1"/>
    <property type="match status" value="1"/>
</dbReference>
<dbReference type="PANTHER" id="PTHR35891">
    <property type="entry name" value="THIOL:DISULFIDE INTERCHANGE PROTEIN DSBA"/>
    <property type="match status" value="1"/>
</dbReference>
<dbReference type="PANTHER" id="PTHR35891:SF2">
    <property type="entry name" value="THIOL:DISULFIDE INTERCHANGE PROTEIN DSBA"/>
    <property type="match status" value="1"/>
</dbReference>
<dbReference type="Pfam" id="PF01323">
    <property type="entry name" value="DSBA"/>
    <property type="match status" value="1"/>
</dbReference>
<dbReference type="PIRSF" id="PIRSF001488">
    <property type="entry name" value="Tdi_protein"/>
    <property type="match status" value="1"/>
</dbReference>
<dbReference type="SUPFAM" id="SSF52833">
    <property type="entry name" value="Thioredoxin-like"/>
    <property type="match status" value="1"/>
</dbReference>
<dbReference type="PROSITE" id="PS00194">
    <property type="entry name" value="THIOREDOXIN_1"/>
    <property type="match status" value="1"/>
</dbReference>
<dbReference type="PROSITE" id="PS51352">
    <property type="entry name" value="THIOREDOXIN_2"/>
    <property type="match status" value="1"/>
</dbReference>
<reference key="1">
    <citation type="journal article" date="1995" name="Mol. Microbiol.">
        <title>Differential effect of dsbA and dsbC mutations on extracellular enzyme secretion in Erwinia chrysanthemi.</title>
        <authorList>
            <person name="Shevchike V.E."/>
            <person name="Bortoli-German I."/>
            <person name="Robert-Baudouy J."/>
            <person name="Robinet S."/>
            <person name="Barras F."/>
            <person name="Condemine G."/>
        </authorList>
    </citation>
    <scope>NUCLEOTIDE SEQUENCE [GENOMIC DNA]</scope>
    <source>
        <strain>3937</strain>
    </source>
</reference>
<reference key="2">
    <citation type="journal article" date="2011" name="J. Bacteriol.">
        <title>Genome sequence of the plant-pathogenic bacterium Dickeya dadantii 3937.</title>
        <authorList>
            <person name="Glasner J.D."/>
            <person name="Yang C.H."/>
            <person name="Reverchon S."/>
            <person name="Hugouvieux-Cotte-Pattat N."/>
            <person name="Condemine G."/>
            <person name="Bohin J.P."/>
            <person name="Van Gijsegem F."/>
            <person name="Yang S."/>
            <person name="Franza T."/>
            <person name="Expert D."/>
            <person name="Plunkett G. III"/>
            <person name="San Francisco M.J."/>
            <person name="Charkowski A.O."/>
            <person name="Py B."/>
            <person name="Bell K."/>
            <person name="Rauscher L."/>
            <person name="Rodriguez-Palenzuela P."/>
            <person name="Toussaint A."/>
            <person name="Holeva M.C."/>
            <person name="He S.Y."/>
            <person name="Douet V."/>
            <person name="Boccara M."/>
            <person name="Blanco C."/>
            <person name="Toth I."/>
            <person name="Anderson B.D."/>
            <person name="Biehl B.S."/>
            <person name="Mau B."/>
            <person name="Flynn S.M."/>
            <person name="Barras F."/>
            <person name="Lindeberg M."/>
            <person name="Birch P.R."/>
            <person name="Tsuyumu S."/>
            <person name="Shi X."/>
            <person name="Hibbing M."/>
            <person name="Yap M.N."/>
            <person name="Carpentier M."/>
            <person name="Dassa E."/>
            <person name="Umehara M."/>
            <person name="Kim J.F."/>
            <person name="Rusch M."/>
            <person name="Soni P."/>
            <person name="Mayhew G.F."/>
            <person name="Fouts D.E."/>
            <person name="Gill S.R."/>
            <person name="Blattner F.R."/>
            <person name="Keen N.T."/>
            <person name="Perna N.T."/>
        </authorList>
    </citation>
    <scope>NUCLEOTIDE SEQUENCE [LARGE SCALE GENOMIC DNA]</scope>
    <source>
        <strain>3937</strain>
    </source>
</reference>
<proteinExistence type="inferred from homology"/>
<organism>
    <name type="scientific">Dickeya dadantii (strain 3937)</name>
    <name type="common">Erwinia chrysanthemi (strain 3937)</name>
    <dbReference type="NCBI Taxonomy" id="198628"/>
    <lineage>
        <taxon>Bacteria</taxon>
        <taxon>Pseudomonadati</taxon>
        <taxon>Pseudomonadota</taxon>
        <taxon>Gammaproteobacteria</taxon>
        <taxon>Enterobacterales</taxon>
        <taxon>Pectobacteriaceae</taxon>
        <taxon>Dickeya</taxon>
    </lineage>
</organism>
<gene>
    <name type="primary">dsbA</name>
    <name type="ordered locus">Dda3937_01111</name>
</gene>